<sequence length="448" mass="48382">MNQPLNVAPPVSSELNLRAHWMPFSANRNFQKDPRIIVAAEGSWLTDDKGRKVYDSLSGLWTCGAGHSRKEIQEAVARQLGTLDYSPGFQYGHPLSFQLAEKIAGLLPGELNHVFFTGSGSECADTSIKMARAYWRLKGQPQKTKLIGRARGYHGVNVAGTSLGGIGGNRKMFGQLMDVDHLPHTLQPGMAFTRGMAQTGGVELANELLKLIELHDASNIAAVIVEPMSGSAGVLVPPVGYLQRLREICDQHNILLIFDEVITAFGRLGTYSGAEYFGVTPDLMNVAKQVTNGAVPMGAVIASSEIYDTFMNQALPEHAVEFSHGYTYSAHPVACAAGLAALDILARDNLVQQSAELAPHFEKGLHGLQGAKNVIDIRNCGLAGAIQIAPRDGDPTVRPFEAGMKLWQQGFYVRFGGDTLQFGPTFNARPEELDRLFDAVGEALNGIA</sequence>
<name>BAUA_PSEAE</name>
<keyword id="KW-0002">3D-structure</keyword>
<keyword id="KW-0032">Aminotransferase</keyword>
<keyword id="KW-0663">Pyridoxal phosphate</keyword>
<keyword id="KW-0670">Pyruvate</keyword>
<keyword id="KW-1185">Reference proteome</keyword>
<keyword id="KW-0808">Transferase</keyword>
<reference key="1">
    <citation type="journal article" date="2000" name="Nature">
        <title>Complete genome sequence of Pseudomonas aeruginosa PAO1, an opportunistic pathogen.</title>
        <authorList>
            <person name="Stover C.K."/>
            <person name="Pham X.-Q.T."/>
            <person name="Erwin A.L."/>
            <person name="Mizoguchi S.D."/>
            <person name="Warrener P."/>
            <person name="Hickey M.J."/>
            <person name="Brinkman F.S.L."/>
            <person name="Hufnagle W.O."/>
            <person name="Kowalik D.J."/>
            <person name="Lagrou M."/>
            <person name="Garber R.L."/>
            <person name="Goltry L."/>
            <person name="Tolentino E."/>
            <person name="Westbrock-Wadman S."/>
            <person name="Yuan Y."/>
            <person name="Brody L.L."/>
            <person name="Coulter S.N."/>
            <person name="Folger K.R."/>
            <person name="Kas A."/>
            <person name="Larbig K."/>
            <person name="Lim R.M."/>
            <person name="Smith K.A."/>
            <person name="Spencer D.H."/>
            <person name="Wong G.K.-S."/>
            <person name="Wu Z."/>
            <person name="Paulsen I.T."/>
            <person name="Reizer J."/>
            <person name="Saier M.H. Jr."/>
            <person name="Hancock R.E.W."/>
            <person name="Lory S."/>
            <person name="Olson M.V."/>
        </authorList>
    </citation>
    <scope>NUCLEOTIDE SEQUENCE [LARGE SCALE GENOMIC DNA]</scope>
    <source>
        <strain>ATCC 15692 / DSM 22644 / CIP 104116 / JCM 14847 / LMG 12228 / 1C / PRS 101 / PAO1</strain>
    </source>
</reference>
<reference key="2">
    <citation type="journal article" date="2011" name="J. Bacteriol.">
        <title>Functional characterization of seven gamma-glutamylpolyamine synthetase genes and the bauRABCD locus for polyamine and beta-alanine utilization in Pseudomonas aeruginosa PAO1.</title>
        <authorList>
            <person name="Yao X."/>
            <person name="He W."/>
            <person name="Lu C.D."/>
        </authorList>
    </citation>
    <scope>FUNCTION</scope>
    <scope>INDUCTION</scope>
    <scope>DISRUPTION PHENOTYPE</scope>
    <source>
        <strain>ATCC 15692 / DSM 22644 / CIP 104116 / JCM 14847 / LMG 12228 / 1C / PRS 101 / PAO1</strain>
    </source>
</reference>
<reference key="3">
    <citation type="journal article" date="2013" name="Acta Crystallogr. D">
        <title>Structural studies of Pseudomonas and Chromobacterium omega-aminotransferases provide insights into their differing substrate specificity.</title>
        <authorList>
            <person name="Sayer C."/>
            <person name="Isupov M.N."/>
            <person name="Westlake A."/>
            <person name="Littlechild J.A."/>
        </authorList>
    </citation>
    <scope>X-RAY CRYSTALLOGRAPHY (1.64 ANGSTROMS) IN COMPLEX WITH SUBSTRATE AND PYRIDOXAL PHOSPHATE</scope>
    <scope>FUNCTION</scope>
    <scope>COFACTOR</scope>
    <scope>ACTIVITY REGULATION</scope>
    <scope>SUBSTRATE SPECIFICITY</scope>
    <scope>SUBUNIT</scope>
    <source>
        <strain>ATCC 15692 / DSM 22644 / CIP 104116 / JCM 14847 / LMG 12228 / 1C / PRS 101 / PAO1</strain>
    </source>
</reference>
<reference key="4">
    <citation type="submission" date="2013-05" db="PDB data bank">
        <title>Space group and origin ambiguity in structures with pseudosymmetry and their treatment in program zanuda.</title>
        <authorList>
            <person name="Lebedev A.A."/>
            <person name="Isupov M.N."/>
        </authorList>
    </citation>
    <scope>X-RAY CRYSTALLOGRAPHY (1.77 ANGSTROMS) IN COMPLEX WITH PYRIDOXAL PHOSPHATE</scope>
    <scope>COFACTOR</scope>
    <scope>SUBUNIT</scope>
</reference>
<evidence type="ECO:0000269" key="1">
    <source>
    </source>
</evidence>
<evidence type="ECO:0000269" key="2">
    <source>
    </source>
</evidence>
<evidence type="ECO:0000269" key="3">
    <source ref="4"/>
</evidence>
<evidence type="ECO:0000305" key="4"/>
<evidence type="ECO:0007829" key="5">
    <source>
        <dbReference type="PDB" id="4B98"/>
    </source>
</evidence>
<evidence type="ECO:0007829" key="6">
    <source>
        <dbReference type="PDB" id="4B9B"/>
    </source>
</evidence>
<gene>
    <name type="primary">bauA</name>
    <name type="ordered locus">PA0132</name>
</gene>
<organism>
    <name type="scientific">Pseudomonas aeruginosa (strain ATCC 15692 / DSM 22644 / CIP 104116 / JCM 14847 / LMG 12228 / 1C / PRS 101 / PAO1)</name>
    <dbReference type="NCBI Taxonomy" id="208964"/>
    <lineage>
        <taxon>Bacteria</taxon>
        <taxon>Pseudomonadati</taxon>
        <taxon>Pseudomonadota</taxon>
        <taxon>Gammaproteobacteria</taxon>
        <taxon>Pseudomonadales</taxon>
        <taxon>Pseudomonadaceae</taxon>
        <taxon>Pseudomonas</taxon>
    </lineage>
</organism>
<protein>
    <recommendedName>
        <fullName>Beta-alanine--pyruvate aminotransferase</fullName>
        <shortName>Beta-A--Py AT</shortName>
        <ecNumber>2.6.1.18</ecNumber>
    </recommendedName>
    <alternativeName>
        <fullName>Beta-alanine--pyruvate transaminase</fullName>
    </alternativeName>
    <alternativeName>
        <fullName>Omega-amino acid aminotransferase</fullName>
        <shortName>Omega-amino acid AT</shortName>
    </alternativeName>
    <alternativeName>
        <fullName>Omega-amino acid--pyruvate aminotransferase</fullName>
        <shortName>Omega-APT</shortName>
    </alternativeName>
</protein>
<feature type="chain" id="PRO_0000428971" description="Beta-alanine--pyruvate aminotransferase">
    <location>
        <begin position="1"/>
        <end position="448"/>
    </location>
</feature>
<feature type="binding site" evidence="2">
    <location>
        <position position="61"/>
    </location>
    <ligand>
        <name>substrate</name>
    </ligand>
</feature>
<feature type="binding site">
    <location>
        <begin position="120"/>
        <end position="121"/>
    </location>
    <ligand>
        <name>pyridoxal 5'-phosphate</name>
        <dbReference type="ChEBI" id="CHEBI:597326"/>
    </ligand>
</feature>
<feature type="binding site" evidence="2 3">
    <location>
        <position position="327"/>
    </location>
    <ligand>
        <name>pyridoxal 5'-phosphate</name>
        <dbReference type="ChEBI" id="CHEBI:597326"/>
    </ligand>
</feature>
<feature type="binding site" evidence="2">
    <location>
        <position position="414"/>
    </location>
    <ligand>
        <name>substrate</name>
    </ligand>
</feature>
<feature type="binding site" evidence="2">
    <location>
        <position position="421"/>
    </location>
    <ligand>
        <name>substrate</name>
    </ligand>
</feature>
<feature type="modified residue" description="N6-(pyridoxal phosphate)lysine">
    <location>
        <position position="288"/>
    </location>
</feature>
<feature type="helix" evidence="5">
    <location>
        <begin position="12"/>
        <end position="14"/>
    </location>
</feature>
<feature type="helix" evidence="6">
    <location>
        <begin position="17"/>
        <end position="19"/>
    </location>
</feature>
<feature type="helix" evidence="6">
    <location>
        <begin position="27"/>
        <end position="32"/>
    </location>
</feature>
<feature type="strand" evidence="6">
    <location>
        <begin position="36"/>
        <end position="42"/>
    </location>
</feature>
<feature type="strand" evidence="6">
    <location>
        <begin position="44"/>
        <end position="47"/>
    </location>
</feature>
<feature type="strand" evidence="6">
    <location>
        <begin position="52"/>
        <end position="55"/>
    </location>
</feature>
<feature type="helix" evidence="6">
    <location>
        <begin position="58"/>
        <end position="61"/>
    </location>
</feature>
<feature type="helix" evidence="6">
    <location>
        <begin position="70"/>
        <end position="82"/>
    </location>
</feature>
<feature type="strand" evidence="6">
    <location>
        <begin position="88"/>
        <end position="90"/>
    </location>
</feature>
<feature type="helix" evidence="6">
    <location>
        <begin position="94"/>
        <end position="105"/>
    </location>
</feature>
<feature type="strand" evidence="6">
    <location>
        <begin position="111"/>
        <end position="119"/>
    </location>
</feature>
<feature type="helix" evidence="6">
    <location>
        <begin position="120"/>
        <end position="137"/>
    </location>
</feature>
<feature type="strand" evidence="6">
    <location>
        <begin position="145"/>
        <end position="149"/>
    </location>
</feature>
<feature type="helix" evidence="6">
    <location>
        <begin position="158"/>
        <end position="163"/>
    </location>
</feature>
<feature type="helix" evidence="6">
    <location>
        <begin position="167"/>
        <end position="170"/>
    </location>
</feature>
<feature type="strand" evidence="6">
    <location>
        <begin position="180"/>
        <end position="182"/>
    </location>
</feature>
<feature type="strand" evidence="6">
    <location>
        <begin position="198"/>
        <end position="200"/>
    </location>
</feature>
<feature type="helix" evidence="6">
    <location>
        <begin position="201"/>
        <end position="205"/>
    </location>
</feature>
<feature type="helix" evidence="6">
    <location>
        <begin position="207"/>
        <end position="215"/>
    </location>
</feature>
<feature type="helix" evidence="6">
    <location>
        <begin position="217"/>
        <end position="219"/>
    </location>
</feature>
<feature type="strand" evidence="6">
    <location>
        <begin position="220"/>
        <end position="225"/>
    </location>
</feature>
<feature type="strand" evidence="6">
    <location>
        <begin position="227"/>
        <end position="229"/>
    </location>
</feature>
<feature type="turn" evidence="6">
    <location>
        <begin position="230"/>
        <end position="233"/>
    </location>
</feature>
<feature type="helix" evidence="6">
    <location>
        <begin position="241"/>
        <end position="252"/>
    </location>
</feature>
<feature type="strand" evidence="6">
    <location>
        <begin position="255"/>
        <end position="259"/>
    </location>
</feature>
<feature type="turn" evidence="6">
    <location>
        <begin position="261"/>
        <end position="268"/>
    </location>
</feature>
<feature type="strand" evidence="6">
    <location>
        <begin position="269"/>
        <end position="271"/>
    </location>
</feature>
<feature type="helix" evidence="6">
    <location>
        <begin position="273"/>
        <end position="277"/>
    </location>
</feature>
<feature type="strand" evidence="6">
    <location>
        <begin position="282"/>
        <end position="286"/>
    </location>
</feature>
<feature type="helix" evidence="6">
    <location>
        <begin position="288"/>
        <end position="291"/>
    </location>
</feature>
<feature type="strand" evidence="6">
    <location>
        <begin position="298"/>
        <end position="303"/>
    </location>
</feature>
<feature type="helix" evidence="6">
    <location>
        <begin position="304"/>
        <end position="311"/>
    </location>
</feature>
<feature type="turn" evidence="6">
    <location>
        <begin position="327"/>
        <end position="330"/>
    </location>
</feature>
<feature type="helix" evidence="6">
    <location>
        <begin position="332"/>
        <end position="347"/>
    </location>
</feature>
<feature type="helix" evidence="6">
    <location>
        <begin position="350"/>
        <end position="366"/>
    </location>
</feature>
<feature type="turn" evidence="6">
    <location>
        <begin position="367"/>
        <end position="370"/>
    </location>
</feature>
<feature type="strand" evidence="6">
    <location>
        <begin position="374"/>
        <end position="380"/>
    </location>
</feature>
<feature type="strand" evidence="6">
    <location>
        <begin position="383"/>
        <end position="388"/>
    </location>
</feature>
<feature type="helix" evidence="6">
    <location>
        <begin position="397"/>
        <end position="408"/>
    </location>
</feature>
<feature type="strand" evidence="6">
    <location>
        <begin position="414"/>
        <end position="416"/>
    </location>
</feature>
<feature type="strand" evidence="6">
    <location>
        <begin position="419"/>
        <end position="422"/>
    </location>
</feature>
<feature type="helix" evidence="6">
    <location>
        <begin position="430"/>
        <end position="445"/>
    </location>
</feature>
<proteinExistence type="evidence at protein level"/>
<comment type="function">
    <text evidence="1 2">Involved in the degradation of beta-alanine. Catalyzes the transfer of the amino group from beta-alanine to pyruvate to yield L-alanine and 3-oxopropanoate. It can also accept both 4-aminobutyrate and (S)-alpha-methylbenzylamine (MBA) as amino-group donors in the presence of pyruvate as an amine acceptor.</text>
</comment>
<comment type="catalytic activity">
    <reaction>
        <text>3-oxopropanoate + L-alanine = beta-alanine + pyruvate</text>
        <dbReference type="Rhea" id="RHEA:14077"/>
        <dbReference type="ChEBI" id="CHEBI:15361"/>
        <dbReference type="ChEBI" id="CHEBI:33190"/>
        <dbReference type="ChEBI" id="CHEBI:57966"/>
        <dbReference type="ChEBI" id="CHEBI:57972"/>
        <dbReference type="EC" id="2.6.1.18"/>
    </reaction>
</comment>
<comment type="cofactor">
    <cofactor evidence="2 3">
        <name>pyridoxal 5'-phosphate</name>
        <dbReference type="ChEBI" id="CHEBI:597326"/>
    </cofactor>
</comment>
<comment type="activity regulation">
    <text evidence="2">Inhibited by gabaculine (5-amino-1,3-cyclohexadienylcarboxylic acid).</text>
</comment>
<comment type="subunit">
    <text evidence="2 3">Homotetramer.</text>
</comment>
<comment type="induction">
    <text evidence="1">Activated by BauR.</text>
</comment>
<comment type="disruption phenotype">
    <text evidence="1">Cells lacking this gene grow normally on putrescine, cadaverine, and GABA, but growth on beta-alanine is completely abolished.</text>
</comment>
<comment type="similarity">
    <text evidence="4">Belongs to the class-III pyridoxal-phosphate-dependent aminotransferase family.</text>
</comment>
<accession>Q9I700</accession>
<dbReference type="EC" id="2.6.1.18"/>
<dbReference type="EMBL" id="AE004091">
    <property type="protein sequence ID" value="AAG03522.1"/>
    <property type="molecule type" value="Genomic_DNA"/>
</dbReference>
<dbReference type="PIR" id="F83628">
    <property type="entry name" value="F83628"/>
</dbReference>
<dbReference type="RefSeq" id="NP_248822.1">
    <property type="nucleotide sequence ID" value="NC_002516.2"/>
</dbReference>
<dbReference type="RefSeq" id="WP_003083801.1">
    <property type="nucleotide sequence ID" value="NZ_QZGE01000015.1"/>
</dbReference>
<dbReference type="PDB" id="4B98">
    <property type="method" value="X-ray"/>
    <property type="resolution" value="1.65 A"/>
    <property type="chains" value="A/B/C/D=1-448"/>
</dbReference>
<dbReference type="PDB" id="4B9B">
    <property type="method" value="X-ray"/>
    <property type="resolution" value="1.64 A"/>
    <property type="chains" value="A/B/C/D/E/F/G/H=1-448"/>
</dbReference>
<dbReference type="PDB" id="4BQ0">
    <property type="method" value="X-ray"/>
    <property type="resolution" value="1.77 A"/>
    <property type="chains" value="A/B/C/D=1-448"/>
</dbReference>
<dbReference type="PDBsum" id="4B98"/>
<dbReference type="PDBsum" id="4B9B"/>
<dbReference type="PDBsum" id="4BQ0"/>
<dbReference type="SMR" id="Q9I700"/>
<dbReference type="STRING" id="208964.PA0132"/>
<dbReference type="PaxDb" id="208964-PA0132"/>
<dbReference type="GeneID" id="879350"/>
<dbReference type="KEGG" id="pae:PA0132"/>
<dbReference type="PATRIC" id="fig|208964.12.peg.137"/>
<dbReference type="PseudoCAP" id="PA0132"/>
<dbReference type="HOGENOM" id="CLU_016922_4_3_6"/>
<dbReference type="InParanoid" id="Q9I700"/>
<dbReference type="OrthoDB" id="9801052at2"/>
<dbReference type="PhylomeDB" id="Q9I700"/>
<dbReference type="BioCyc" id="PAER208964:G1FZ6-134-MONOMER"/>
<dbReference type="EvolutionaryTrace" id="Q9I700"/>
<dbReference type="Proteomes" id="UP000002438">
    <property type="component" value="Chromosome"/>
</dbReference>
<dbReference type="GO" id="GO:0004015">
    <property type="term" value="F:adenosylmethionine-8-amino-7-oxononanoate transaminase activity"/>
    <property type="evidence" value="ECO:0000318"/>
    <property type="project" value="GO_Central"/>
</dbReference>
<dbReference type="GO" id="GO:0016223">
    <property type="term" value="F:beta-alanine:pyruvate transaminase activity"/>
    <property type="evidence" value="ECO:0007669"/>
    <property type="project" value="UniProtKB-EC"/>
</dbReference>
<dbReference type="GO" id="GO:0030170">
    <property type="term" value="F:pyridoxal phosphate binding"/>
    <property type="evidence" value="ECO:0007669"/>
    <property type="project" value="InterPro"/>
</dbReference>
<dbReference type="GO" id="GO:0019483">
    <property type="term" value="P:beta-alanine biosynthetic process"/>
    <property type="evidence" value="ECO:0000314"/>
    <property type="project" value="PseudoCAP"/>
</dbReference>
<dbReference type="GO" id="GO:0009102">
    <property type="term" value="P:biotin biosynthetic process"/>
    <property type="evidence" value="ECO:0000318"/>
    <property type="project" value="GO_Central"/>
</dbReference>
<dbReference type="CDD" id="cd00610">
    <property type="entry name" value="OAT_like"/>
    <property type="match status" value="1"/>
</dbReference>
<dbReference type="FunFam" id="3.40.640.10:FF:000014">
    <property type="entry name" value="Adenosylmethionine-8-amino-7-oxononanoate aminotransferase, probable"/>
    <property type="match status" value="1"/>
</dbReference>
<dbReference type="Gene3D" id="3.90.1150.10">
    <property type="entry name" value="Aspartate Aminotransferase, domain 1"/>
    <property type="match status" value="1"/>
</dbReference>
<dbReference type="Gene3D" id="3.40.640.10">
    <property type="entry name" value="Type I PLP-dependent aspartate aminotransferase-like (Major domain)"/>
    <property type="match status" value="1"/>
</dbReference>
<dbReference type="InterPro" id="IPR005814">
    <property type="entry name" value="Aminotrans_3"/>
</dbReference>
<dbReference type="InterPro" id="IPR049704">
    <property type="entry name" value="Aminotrans_3_PPA_site"/>
</dbReference>
<dbReference type="InterPro" id="IPR015424">
    <property type="entry name" value="PyrdxlP-dep_Trfase"/>
</dbReference>
<dbReference type="InterPro" id="IPR015421">
    <property type="entry name" value="PyrdxlP-dep_Trfase_major"/>
</dbReference>
<dbReference type="InterPro" id="IPR015422">
    <property type="entry name" value="PyrdxlP-dep_Trfase_small"/>
</dbReference>
<dbReference type="PANTHER" id="PTHR42684">
    <property type="entry name" value="ADENOSYLMETHIONINE-8-AMINO-7-OXONONANOATE AMINOTRANSFERASE"/>
    <property type="match status" value="1"/>
</dbReference>
<dbReference type="PANTHER" id="PTHR42684:SF1">
    <property type="entry name" value="BETA-ALANINE--PYRUVATE AMINOTRANSFERASE"/>
    <property type="match status" value="1"/>
</dbReference>
<dbReference type="Pfam" id="PF00202">
    <property type="entry name" value="Aminotran_3"/>
    <property type="match status" value="1"/>
</dbReference>
<dbReference type="PIRSF" id="PIRSF000521">
    <property type="entry name" value="Transaminase_4ab_Lys_Orn"/>
    <property type="match status" value="1"/>
</dbReference>
<dbReference type="SUPFAM" id="SSF53383">
    <property type="entry name" value="PLP-dependent transferases"/>
    <property type="match status" value="1"/>
</dbReference>
<dbReference type="PROSITE" id="PS00600">
    <property type="entry name" value="AA_TRANSFER_CLASS_3"/>
    <property type="match status" value="1"/>
</dbReference>